<sequence length="360" mass="41001">MKFGNFLLTYQPPQFSQTEVMKRLVKLGRISEECGFDTVWLLEHHFTEFGLLGNPYVAAAYLLGATKKLNVGTAAIVLPTAHPVRQLEDVNLLDQMSKGRFRFGICRGLYNKDFRVFGTDMNNSRALAECWYGLIKNGMTEGYMEADNEHIKFHKVKVNPAAYSRGGAPVYVVAESASTTEWAAQFGLPMILSWIINTNEKKAQLELYNEVAQEYGHDIHNIDHCLSYITSVDHDSIKAKEICRKFLGHWYDSYVNATTIFDDSDQTRGYDFNKGQWRDFVLKGHKDTNRRIDYSYEINPVGTPQECIDIIQKDIDATGISNICCGFEANGTVDEIIASMKLFQSDVMPFLKEKQRSLLY</sequence>
<accession>P19839</accession>
<protein>
    <recommendedName>
        <fullName>Alkanal monooxygenase alpha chain</fullName>
        <ecNumber evidence="2">1.14.14.3</ecNumber>
    </recommendedName>
    <alternativeName>
        <fullName>Bacterial luciferase alpha chain</fullName>
    </alternativeName>
</protein>
<dbReference type="EC" id="1.14.14.3" evidence="2"/>
<dbReference type="EMBL" id="M57416">
    <property type="protein sequence ID" value="AAA27623.1"/>
    <property type="molecule type" value="Genomic_DNA"/>
</dbReference>
<dbReference type="EMBL" id="M90093">
    <property type="protein sequence ID" value="AAA27619.1"/>
    <property type="molecule type" value="Genomic_DNA"/>
</dbReference>
<dbReference type="EMBL" id="M55977">
    <property type="protein sequence ID" value="AAA27626.1"/>
    <property type="molecule type" value="Genomic_DNA"/>
</dbReference>
<dbReference type="PIR" id="B35411">
    <property type="entry name" value="B35411"/>
</dbReference>
<dbReference type="RefSeq" id="WP_033875256.1">
    <property type="nucleotide sequence ID" value="NZ_FMWJ01000001.1"/>
</dbReference>
<dbReference type="SMR" id="P19839"/>
<dbReference type="STRING" id="29488.KS18_21620"/>
<dbReference type="KEGG" id="ag:AAA27623"/>
<dbReference type="OrthoDB" id="7903015at2"/>
<dbReference type="BRENDA" id="1.14.14.3">
    <property type="organism ID" value="4782"/>
</dbReference>
<dbReference type="GO" id="GO:0005829">
    <property type="term" value="C:cytosol"/>
    <property type="evidence" value="ECO:0007669"/>
    <property type="project" value="TreeGrafter"/>
</dbReference>
<dbReference type="GO" id="GO:0047646">
    <property type="term" value="F:alkanal monooxygenase (FMN-linked) activity"/>
    <property type="evidence" value="ECO:0007669"/>
    <property type="project" value="UniProtKB-EC"/>
</dbReference>
<dbReference type="GO" id="GO:0008218">
    <property type="term" value="P:bioluminescence"/>
    <property type="evidence" value="ECO:0007669"/>
    <property type="project" value="UniProtKB-KW"/>
</dbReference>
<dbReference type="CDD" id="cd01096">
    <property type="entry name" value="Alkanal_monooxygenase"/>
    <property type="match status" value="1"/>
</dbReference>
<dbReference type="Gene3D" id="3.20.20.30">
    <property type="entry name" value="Luciferase-like domain"/>
    <property type="match status" value="1"/>
</dbReference>
<dbReference type="InterPro" id="IPR033924">
    <property type="entry name" value="Alkanal_monooxygenase"/>
</dbReference>
<dbReference type="InterPro" id="IPR050766">
    <property type="entry name" value="Bact_Lucif_Oxidored"/>
</dbReference>
<dbReference type="InterPro" id="IPR018235">
    <property type="entry name" value="Bacterial_luciferase_CS"/>
</dbReference>
<dbReference type="InterPro" id="IPR011251">
    <property type="entry name" value="Luciferase-like_dom"/>
</dbReference>
<dbReference type="InterPro" id="IPR036661">
    <property type="entry name" value="Luciferase-like_sf"/>
</dbReference>
<dbReference type="InterPro" id="IPR002103">
    <property type="entry name" value="Luciferase_bac/NFP"/>
</dbReference>
<dbReference type="PANTHER" id="PTHR30137:SF8">
    <property type="entry name" value="BLR5498 PROTEIN"/>
    <property type="match status" value="1"/>
</dbReference>
<dbReference type="PANTHER" id="PTHR30137">
    <property type="entry name" value="LUCIFERASE-LIKE MONOOXYGENASE"/>
    <property type="match status" value="1"/>
</dbReference>
<dbReference type="Pfam" id="PF00296">
    <property type="entry name" value="Bac_luciferase"/>
    <property type="match status" value="1"/>
</dbReference>
<dbReference type="PRINTS" id="PR00089">
    <property type="entry name" value="LUCIFERASE"/>
</dbReference>
<dbReference type="SUPFAM" id="SSF51679">
    <property type="entry name" value="Bacterial luciferase-like"/>
    <property type="match status" value="1"/>
</dbReference>
<dbReference type="PROSITE" id="PS00494">
    <property type="entry name" value="BACTERIAL_LUCIFERASE"/>
    <property type="match status" value="1"/>
</dbReference>
<name>LUXA1_PHOLU</name>
<keyword id="KW-0285">Flavoprotein</keyword>
<keyword id="KW-0288">FMN</keyword>
<keyword id="KW-0455">Luminescence</keyword>
<keyword id="KW-0503">Monooxygenase</keyword>
<keyword id="KW-0560">Oxidoreductase</keyword>
<keyword id="KW-0599">Photoprotein</keyword>
<organism>
    <name type="scientific">Photorhabdus luminescens</name>
    <name type="common">Xenorhabdus luminescens</name>
    <dbReference type="NCBI Taxonomy" id="29488"/>
    <lineage>
        <taxon>Bacteria</taxon>
        <taxon>Pseudomonadati</taxon>
        <taxon>Pseudomonadota</taxon>
        <taxon>Gammaproteobacteria</taxon>
        <taxon>Enterobacterales</taxon>
        <taxon>Morganellaceae</taxon>
        <taxon>Photorhabdus</taxon>
    </lineage>
</organism>
<proteinExistence type="evidence at protein level"/>
<evidence type="ECO:0000250" key="1">
    <source>
        <dbReference type="UniProtKB" id="P07740"/>
    </source>
</evidence>
<evidence type="ECO:0000269" key="2">
    <source>
    </source>
</evidence>
<evidence type="ECO:0000305" key="3"/>
<comment type="function">
    <text evidence="2">Light-emitting reaction in luminous bacteria.</text>
</comment>
<comment type="catalytic activity">
    <reaction evidence="2">
        <text>a long-chain fatty aldehyde + FMNH2 + O2 = a long-chain fatty acid + hnu + FMN + H2O + 2 H(+)</text>
        <dbReference type="Rhea" id="RHEA:17181"/>
        <dbReference type="ChEBI" id="CHEBI:15377"/>
        <dbReference type="ChEBI" id="CHEBI:15378"/>
        <dbReference type="ChEBI" id="CHEBI:15379"/>
        <dbReference type="ChEBI" id="CHEBI:17176"/>
        <dbReference type="ChEBI" id="CHEBI:30212"/>
        <dbReference type="ChEBI" id="CHEBI:57560"/>
        <dbReference type="ChEBI" id="CHEBI:57618"/>
        <dbReference type="ChEBI" id="CHEBI:58210"/>
        <dbReference type="EC" id="1.14.14.3"/>
    </reaction>
</comment>
<comment type="subunit">
    <text evidence="1">Heterodimer of an alpha and a beta chain.</text>
</comment>
<comment type="miscellaneous">
    <text>The synthesis of this protein is regulated by a complex control mechanism that has been termed autoinduction.</text>
</comment>
<comment type="similarity">
    <text evidence="3">Belongs to the bacterial luciferase oxidoreductase family.</text>
</comment>
<reference key="1">
    <citation type="journal article" date="1990" name="J. Biol. Chem.">
        <title>Nucleotide sequence, expression, and properties of luciferase coded by lux genes from a terrestrial bacterium.</title>
        <authorList>
            <person name="Szittner R."/>
            <person name="Meighen E."/>
        </authorList>
    </citation>
    <scope>NUCLEOTIDE SEQUENCE [GENOMIC DNA]</scope>
    <scope>FUNCTION</scope>
    <scope>CATALYTIC ACTIVITY</scope>
    <source>
        <strain>ATCC 29999 / DSM 3368 / BCRC 14801 / CCM 7077 / CIP 106429 / NCIMB 12670 / Hb</strain>
    </source>
</reference>
<reference key="2">
    <citation type="journal article" date="1992" name="J. Bacteriol.">
        <title>Multiple repetitive elements and organization of the lux operons of luminescent terrestrial bacteria.</title>
        <authorList>
            <person name="Meighen E.A."/>
            <person name="Szittner R.B."/>
        </authorList>
    </citation>
    <scope>NUCLEOTIDE SEQUENCE [GENOMIC DNA]</scope>
    <source>
        <strain>ATCC 29999 / DSM 3368 / BCRC 14801 / CCM 7077 / CIP 106429 / NCIMB 12670 / Hb</strain>
    </source>
</reference>
<reference key="3">
    <citation type="journal article" date="1990" name="Biochem. Biophys. Res. Commun.">
        <title>The nucleotide sequence of the luxA and luxB genes of Xenorhabdus luminescens HM and a comparison of the amino acid sequences of luciferases from four species of bioluminescent bacteria.</title>
        <authorList>
            <person name="Johnston T.C."/>
            <person name="Rucker E.B."/>
            <person name="Cochrum L."/>
            <person name="Hruska K.S."/>
            <person name="Vandegrift V."/>
        </authorList>
    </citation>
    <scope>NUCLEOTIDE SEQUENCE [GENOMIC DNA]</scope>
    <source>
        <strain>Hm</strain>
    </source>
</reference>
<gene>
    <name type="primary">luxA</name>
</gene>
<feature type="chain" id="PRO_0000220167" description="Alkanal monooxygenase alpha chain">
    <location>
        <begin position="1"/>
        <end position="360"/>
    </location>
</feature>